<reference key="1">
    <citation type="journal article" date="2002" name="Proc. Natl. Acad. Sci. U.S.A.">
        <title>Genome sequence of Streptococcus mutans UA159, a cariogenic dental pathogen.</title>
        <authorList>
            <person name="Ajdic D.J."/>
            <person name="McShan W.M."/>
            <person name="McLaughlin R.E."/>
            <person name="Savic G."/>
            <person name="Chang J."/>
            <person name="Carson M.B."/>
            <person name="Primeaux C."/>
            <person name="Tian R."/>
            <person name="Kenton S."/>
            <person name="Jia H.G."/>
            <person name="Lin S.P."/>
            <person name="Qian Y."/>
            <person name="Li S."/>
            <person name="Zhu H."/>
            <person name="Najar F.Z."/>
            <person name="Lai H."/>
            <person name="White J."/>
            <person name="Roe B.A."/>
            <person name="Ferretti J.J."/>
        </authorList>
    </citation>
    <scope>NUCLEOTIDE SEQUENCE [LARGE SCALE GENOMIC DNA]</scope>
    <source>
        <strain>ATCC 700610 / UA159</strain>
    </source>
</reference>
<proteinExistence type="inferred from homology"/>
<feature type="chain" id="PRO_0000125235" description="Large ribosomal subunit protein uL22">
    <location>
        <begin position="1"/>
        <end position="114"/>
    </location>
</feature>
<accession>Q8DS19</accession>
<keyword id="KW-1185">Reference proteome</keyword>
<keyword id="KW-0687">Ribonucleoprotein</keyword>
<keyword id="KW-0689">Ribosomal protein</keyword>
<keyword id="KW-0694">RNA-binding</keyword>
<keyword id="KW-0699">rRNA-binding</keyword>
<name>RL22_STRMU</name>
<organism>
    <name type="scientific">Streptococcus mutans serotype c (strain ATCC 700610 / UA159)</name>
    <dbReference type="NCBI Taxonomy" id="210007"/>
    <lineage>
        <taxon>Bacteria</taxon>
        <taxon>Bacillati</taxon>
        <taxon>Bacillota</taxon>
        <taxon>Bacilli</taxon>
        <taxon>Lactobacillales</taxon>
        <taxon>Streptococcaceae</taxon>
        <taxon>Streptococcus</taxon>
    </lineage>
</organism>
<sequence>MAEITSAKAMARTVRVSPRKTRLVLDLIRGKNVADAIAILKFTPNKAARIVEKTLNSAVANAENNFGLEKANLVVSETFANEGPTMKRFRPRAKGSASPINKRTTHVTVVVEEK</sequence>
<comment type="function">
    <text evidence="1">This protein binds specifically to 23S rRNA; its binding is stimulated by other ribosomal proteins, e.g. L4, L17, and L20. It is important during the early stages of 50S assembly. It makes multiple contacts with different domains of the 23S rRNA in the assembled 50S subunit and ribosome (By similarity).</text>
</comment>
<comment type="function">
    <text evidence="1">The globular domain of the protein is located near the polypeptide exit tunnel on the outside of the subunit, while an extended beta-hairpin is found that lines the wall of the exit tunnel in the center of the 70S ribosome.</text>
</comment>
<comment type="subunit">
    <text evidence="1">Part of the 50S ribosomal subunit.</text>
</comment>
<comment type="similarity">
    <text evidence="1">Belongs to the universal ribosomal protein uL22 family.</text>
</comment>
<protein>
    <recommendedName>
        <fullName evidence="1">Large ribosomal subunit protein uL22</fullName>
    </recommendedName>
    <alternativeName>
        <fullName evidence="2">50S ribosomal protein L22</fullName>
    </alternativeName>
</protein>
<dbReference type="EMBL" id="AE014133">
    <property type="protein sequence ID" value="AAN59625.1"/>
    <property type="molecule type" value="Genomic_DNA"/>
</dbReference>
<dbReference type="RefSeq" id="NP_722319.1">
    <property type="nucleotide sequence ID" value="NC_004350.2"/>
</dbReference>
<dbReference type="RefSeq" id="WP_002262335.1">
    <property type="nucleotide sequence ID" value="NC_004350.2"/>
</dbReference>
<dbReference type="SMR" id="Q8DS19"/>
<dbReference type="STRING" id="210007.SMU_2022"/>
<dbReference type="GeneID" id="93860224"/>
<dbReference type="KEGG" id="smu:SMU_2022"/>
<dbReference type="PATRIC" id="fig|210007.7.peg.1802"/>
<dbReference type="eggNOG" id="COG0091">
    <property type="taxonomic scope" value="Bacteria"/>
</dbReference>
<dbReference type="HOGENOM" id="CLU_083987_3_3_9"/>
<dbReference type="OrthoDB" id="9805969at2"/>
<dbReference type="PhylomeDB" id="Q8DS19"/>
<dbReference type="Proteomes" id="UP000002512">
    <property type="component" value="Chromosome"/>
</dbReference>
<dbReference type="GO" id="GO:0022625">
    <property type="term" value="C:cytosolic large ribosomal subunit"/>
    <property type="evidence" value="ECO:0007669"/>
    <property type="project" value="TreeGrafter"/>
</dbReference>
<dbReference type="GO" id="GO:0019843">
    <property type="term" value="F:rRNA binding"/>
    <property type="evidence" value="ECO:0007669"/>
    <property type="project" value="UniProtKB-UniRule"/>
</dbReference>
<dbReference type="GO" id="GO:0003735">
    <property type="term" value="F:structural constituent of ribosome"/>
    <property type="evidence" value="ECO:0007669"/>
    <property type="project" value="InterPro"/>
</dbReference>
<dbReference type="GO" id="GO:0006412">
    <property type="term" value="P:translation"/>
    <property type="evidence" value="ECO:0007669"/>
    <property type="project" value="UniProtKB-UniRule"/>
</dbReference>
<dbReference type="CDD" id="cd00336">
    <property type="entry name" value="Ribosomal_L22"/>
    <property type="match status" value="1"/>
</dbReference>
<dbReference type="FunFam" id="3.90.470.10:FF:000001">
    <property type="entry name" value="50S ribosomal protein L22"/>
    <property type="match status" value="1"/>
</dbReference>
<dbReference type="Gene3D" id="3.90.470.10">
    <property type="entry name" value="Ribosomal protein L22/L17"/>
    <property type="match status" value="1"/>
</dbReference>
<dbReference type="HAMAP" id="MF_01331_B">
    <property type="entry name" value="Ribosomal_uL22_B"/>
    <property type="match status" value="1"/>
</dbReference>
<dbReference type="InterPro" id="IPR001063">
    <property type="entry name" value="Ribosomal_uL22"/>
</dbReference>
<dbReference type="InterPro" id="IPR005727">
    <property type="entry name" value="Ribosomal_uL22_bac/chlpt-type"/>
</dbReference>
<dbReference type="InterPro" id="IPR047867">
    <property type="entry name" value="Ribosomal_uL22_bac/org-type"/>
</dbReference>
<dbReference type="InterPro" id="IPR018260">
    <property type="entry name" value="Ribosomal_uL22_CS"/>
</dbReference>
<dbReference type="InterPro" id="IPR036394">
    <property type="entry name" value="Ribosomal_uL22_sf"/>
</dbReference>
<dbReference type="NCBIfam" id="TIGR01044">
    <property type="entry name" value="rplV_bact"/>
    <property type="match status" value="1"/>
</dbReference>
<dbReference type="PANTHER" id="PTHR13501">
    <property type="entry name" value="CHLOROPLAST 50S RIBOSOMAL PROTEIN L22-RELATED"/>
    <property type="match status" value="1"/>
</dbReference>
<dbReference type="PANTHER" id="PTHR13501:SF8">
    <property type="entry name" value="LARGE RIBOSOMAL SUBUNIT PROTEIN UL22M"/>
    <property type="match status" value="1"/>
</dbReference>
<dbReference type="Pfam" id="PF00237">
    <property type="entry name" value="Ribosomal_L22"/>
    <property type="match status" value="1"/>
</dbReference>
<dbReference type="SUPFAM" id="SSF54843">
    <property type="entry name" value="Ribosomal protein L22"/>
    <property type="match status" value="1"/>
</dbReference>
<dbReference type="PROSITE" id="PS00464">
    <property type="entry name" value="RIBOSOMAL_L22"/>
    <property type="match status" value="1"/>
</dbReference>
<evidence type="ECO:0000255" key="1">
    <source>
        <dbReference type="HAMAP-Rule" id="MF_01331"/>
    </source>
</evidence>
<evidence type="ECO:0000305" key="2"/>
<gene>
    <name evidence="1" type="primary">rplV</name>
    <name type="synonym">rl22</name>
    <name type="ordered locus">SMU_2022</name>
</gene>